<accession>A0A179H2Q3</accession>
<keyword id="KW-0325">Glycoprotein</keyword>
<keyword id="KW-1185">Reference proteome</keyword>
<keyword id="KW-0732">Signal</keyword>
<feature type="signal peptide" evidence="1">
    <location>
        <begin position="1"/>
        <end position="15"/>
    </location>
</feature>
<feature type="chain" id="PRO_5011877981" description="Leucinostatins biosynthesis cluster protein T" evidence="1">
    <location>
        <begin position="16"/>
        <end position="269"/>
    </location>
</feature>
<feature type="glycosylation site" description="N-linked (GlcNAc...) asparagine" evidence="2">
    <location>
        <position position="254"/>
    </location>
</feature>
<evidence type="ECO:0000255" key="1"/>
<evidence type="ECO:0000255" key="2">
    <source>
        <dbReference type="PROSITE-ProRule" id="PRU00498"/>
    </source>
</evidence>
<evidence type="ECO:0000269" key="3">
    <source>
    </source>
</evidence>
<evidence type="ECO:0000303" key="4">
    <source>
    </source>
</evidence>
<evidence type="ECO:0000305" key="5">
    <source>
    </source>
</evidence>
<comment type="function">
    <text evidence="3 5">Part of the gene cluster that mediates the biosynthesis of the lipopeptide antibiotics leucinostatins that show extensive biological activities, including antimalarial, antiviral, antibacterial, antifungal, and antitumor activities, as well as phytotoxic (PubMed:27416025). The function of lcsT within the leucinostatins biosynthesis has not been identified yet (Probable).</text>
</comment>
<comment type="induction">
    <text evidence="3">Expression is positively regulated by the leucinostatins biosynthesis cluster-specific transcription regulator lcsF.</text>
</comment>
<gene>
    <name evidence="4" type="primary">lcsT</name>
    <name type="ORF">VFPBJ_02538</name>
    <name type="ORF">VFPFJ_04710</name>
</gene>
<protein>
    <recommendedName>
        <fullName evidence="4">Leucinostatins biosynthesis cluster protein T</fullName>
    </recommendedName>
</protein>
<dbReference type="EMBL" id="LSBH01000002">
    <property type="protein sequence ID" value="OAQ83771.1"/>
    <property type="molecule type" value="Genomic_DNA"/>
</dbReference>
<dbReference type="EMBL" id="LSBI01000004">
    <property type="protein sequence ID" value="OAQ90551.1"/>
    <property type="molecule type" value="Genomic_DNA"/>
</dbReference>
<dbReference type="RefSeq" id="XP_018179270.1">
    <property type="nucleotide sequence ID" value="XM_018321790.1"/>
</dbReference>
<dbReference type="STRING" id="33203.A0A179H2Q3"/>
<dbReference type="GlyCosmos" id="A0A179H2Q3">
    <property type="glycosylation" value="1 site, No reported glycans"/>
</dbReference>
<dbReference type="GeneID" id="28886839"/>
<dbReference type="KEGG" id="plj:28886839"/>
<dbReference type="OMA" id="EYEYAHI"/>
<dbReference type="OrthoDB" id="9975943at2759"/>
<dbReference type="Proteomes" id="UP000078240">
    <property type="component" value="Unassembled WGS sequence"/>
</dbReference>
<dbReference type="Proteomes" id="UP000078340">
    <property type="component" value="Unassembled WGS sequence"/>
</dbReference>
<dbReference type="Gene3D" id="3.40.50.720">
    <property type="entry name" value="NAD(P)-binding Rossmann-like Domain"/>
    <property type="match status" value="1"/>
</dbReference>
<dbReference type="InterPro" id="IPR036291">
    <property type="entry name" value="NAD(P)-bd_dom_sf"/>
</dbReference>
<dbReference type="PANTHER" id="PTHR14097:SF8">
    <property type="entry name" value="NAD(P)-BINDING DOMAIN-CONTAINING PROTEIN"/>
    <property type="match status" value="1"/>
</dbReference>
<dbReference type="PANTHER" id="PTHR14097">
    <property type="entry name" value="OXIDOREDUCTASE HTATIP2"/>
    <property type="match status" value="1"/>
</dbReference>
<dbReference type="SUPFAM" id="SSF51735">
    <property type="entry name" value="NAD(P)-binding Rossmann-fold domains"/>
    <property type="match status" value="1"/>
</dbReference>
<organism>
    <name type="scientific">Purpureocillium lilacinum</name>
    <name type="common">Paecilomyces lilacinus</name>
    <dbReference type="NCBI Taxonomy" id="33203"/>
    <lineage>
        <taxon>Eukaryota</taxon>
        <taxon>Fungi</taxon>
        <taxon>Dikarya</taxon>
        <taxon>Ascomycota</taxon>
        <taxon>Pezizomycotina</taxon>
        <taxon>Sordariomycetes</taxon>
        <taxon>Hypocreomycetidae</taxon>
        <taxon>Hypocreales</taxon>
        <taxon>Ophiocordycipitaceae</taxon>
        <taxon>Purpureocillium</taxon>
    </lineage>
</organism>
<proteinExistence type="evidence at transcript level"/>
<name>LCST_PURLI</name>
<sequence length="269" mass="29591">MHIILTGTGLVGAIALDAMLQESSIDKITIISRKPVPQAEGQSKVEVIIQEDLSTYSDETLAKLKGAHGCIWTAGPPLMAVTRQEYEYGHIDLPVKAAKAFAALNDKFNFVYVSHDGCHDTRAVYIFDVKARAEEKLFQLHHDPSKRLEIKTKGGIEEQESLSSFVLYCIRPALIDYSTHDAIKPWLKPLPLAKKWTNGVILPLYRFLGLTSIMGTSQELGQAMKDLVISDGRDVDVAGASPEGRCLGAVGMRNWTQARNESPEDTVAV</sequence>
<reference key="1">
    <citation type="journal article" date="2016" name="PLoS Pathog.">
        <title>Biosynthesis of antibiotic leucinostatins in bio-control fungus Purpureocillium lilacinum and their inhibition on phytophthora revealed by genome mining.</title>
        <authorList>
            <person name="Wang G."/>
            <person name="Liu Z."/>
            <person name="Lin R."/>
            <person name="Li E."/>
            <person name="Mao Z."/>
            <person name="Ling J."/>
            <person name="Yang Y."/>
            <person name="Yin W.B."/>
            <person name="Xie B."/>
        </authorList>
    </citation>
    <scope>NUCLEOTIDE SEQUENCE [LARGE SCALE GENOMIC DNA]</scope>
    <scope>IDENTIFICATION</scope>
    <scope>FUNCTION</scope>
    <scope>INDUCTION</scope>
    <source>
        <strain>PLBJ-1</strain>
    </source>
</reference>